<dbReference type="EC" id="2.7.8.13" evidence="1"/>
<dbReference type="EMBL" id="AE008923">
    <property type="protein sequence ID" value="AAM35665.1"/>
    <property type="molecule type" value="Genomic_DNA"/>
</dbReference>
<dbReference type="RefSeq" id="WP_003485285.1">
    <property type="nucleotide sequence ID" value="NC_003919.1"/>
</dbReference>
<dbReference type="SMR" id="Q8PPB0"/>
<dbReference type="GeneID" id="97509161"/>
<dbReference type="KEGG" id="xac:XAC0777"/>
<dbReference type="eggNOG" id="COG0472">
    <property type="taxonomic scope" value="Bacteria"/>
</dbReference>
<dbReference type="HOGENOM" id="CLU_023982_0_0_6"/>
<dbReference type="UniPathway" id="UPA00219"/>
<dbReference type="Proteomes" id="UP000000576">
    <property type="component" value="Chromosome"/>
</dbReference>
<dbReference type="GO" id="GO:0005886">
    <property type="term" value="C:plasma membrane"/>
    <property type="evidence" value="ECO:0007669"/>
    <property type="project" value="UniProtKB-SubCell"/>
</dbReference>
<dbReference type="GO" id="GO:0046872">
    <property type="term" value="F:metal ion binding"/>
    <property type="evidence" value="ECO:0007669"/>
    <property type="project" value="UniProtKB-KW"/>
</dbReference>
<dbReference type="GO" id="GO:0008963">
    <property type="term" value="F:phospho-N-acetylmuramoyl-pentapeptide-transferase activity"/>
    <property type="evidence" value="ECO:0007669"/>
    <property type="project" value="UniProtKB-UniRule"/>
</dbReference>
<dbReference type="GO" id="GO:0051992">
    <property type="term" value="F:UDP-N-acetylmuramoyl-L-alanyl-D-glutamyl-meso-2,6-diaminopimelyl-D-alanyl-D-alanine:undecaprenyl-phosphate transferase activity"/>
    <property type="evidence" value="ECO:0007669"/>
    <property type="project" value="RHEA"/>
</dbReference>
<dbReference type="GO" id="GO:0051301">
    <property type="term" value="P:cell division"/>
    <property type="evidence" value="ECO:0007669"/>
    <property type="project" value="UniProtKB-KW"/>
</dbReference>
<dbReference type="GO" id="GO:0071555">
    <property type="term" value="P:cell wall organization"/>
    <property type="evidence" value="ECO:0007669"/>
    <property type="project" value="UniProtKB-KW"/>
</dbReference>
<dbReference type="GO" id="GO:0009252">
    <property type="term" value="P:peptidoglycan biosynthetic process"/>
    <property type="evidence" value="ECO:0007669"/>
    <property type="project" value="UniProtKB-UniRule"/>
</dbReference>
<dbReference type="GO" id="GO:0008360">
    <property type="term" value="P:regulation of cell shape"/>
    <property type="evidence" value="ECO:0007669"/>
    <property type="project" value="UniProtKB-KW"/>
</dbReference>
<dbReference type="CDD" id="cd06852">
    <property type="entry name" value="GT_MraY"/>
    <property type="match status" value="1"/>
</dbReference>
<dbReference type="HAMAP" id="MF_00038">
    <property type="entry name" value="MraY"/>
    <property type="match status" value="1"/>
</dbReference>
<dbReference type="InterPro" id="IPR000715">
    <property type="entry name" value="Glycosyl_transferase_4"/>
</dbReference>
<dbReference type="InterPro" id="IPR003524">
    <property type="entry name" value="PNAcMuramoyl-5peptid_Trfase"/>
</dbReference>
<dbReference type="InterPro" id="IPR018480">
    <property type="entry name" value="PNAcMuramoyl-5peptid_Trfase_CS"/>
</dbReference>
<dbReference type="NCBIfam" id="TIGR00445">
    <property type="entry name" value="mraY"/>
    <property type="match status" value="1"/>
</dbReference>
<dbReference type="PANTHER" id="PTHR22926">
    <property type="entry name" value="PHOSPHO-N-ACETYLMURAMOYL-PENTAPEPTIDE-TRANSFERASE"/>
    <property type="match status" value="1"/>
</dbReference>
<dbReference type="PANTHER" id="PTHR22926:SF5">
    <property type="entry name" value="PHOSPHO-N-ACETYLMURAMOYL-PENTAPEPTIDE-TRANSFERASE HOMOLOG"/>
    <property type="match status" value="1"/>
</dbReference>
<dbReference type="Pfam" id="PF00953">
    <property type="entry name" value="Glycos_transf_4"/>
    <property type="match status" value="1"/>
</dbReference>
<dbReference type="PROSITE" id="PS01347">
    <property type="entry name" value="MRAY_1"/>
    <property type="match status" value="1"/>
</dbReference>
<dbReference type="PROSITE" id="PS01348">
    <property type="entry name" value="MRAY_2"/>
    <property type="match status" value="1"/>
</dbReference>
<protein>
    <recommendedName>
        <fullName evidence="1">Phospho-N-acetylmuramoyl-pentapeptide-transferase</fullName>
        <ecNumber evidence="1">2.7.8.13</ecNumber>
    </recommendedName>
    <alternativeName>
        <fullName evidence="1">UDP-MurNAc-pentapeptide phosphotransferase</fullName>
    </alternativeName>
</protein>
<sequence>MLLELARWLQQLESLFGLFNYLTFRGILAALTALFLSLWMGPAVIRKLAQFKGGQPIRQDGPQTHFSKAGTPTMGGSLILLTVTLSVLLWGDLRNRYVWLVLAVMICFGAIGWYDDWIKIVKRDPNGLKSRWKYLLQSIFGLAAGLFLYYTADVPAAITFYIPMFKSIALPLAGVSFVVIAYFWIVGFSNAVNLTDGLDGLAIMPTVLVACALGVFAYASGNVVFAEYLKIPLIPGAGELIIICSAIAGAGLGFLWFNTYPAMVFMGDIGALSLGAVLGTIAVIVRQEMVLVIMGGVFVIETLSVMIQVASFKLTGKRVFRMAPIHHHFELKGWPEPRVIVRFWIISVVLVLIGLATLKVR</sequence>
<reference key="1">
    <citation type="journal article" date="2002" name="Nature">
        <title>Comparison of the genomes of two Xanthomonas pathogens with differing host specificities.</title>
        <authorList>
            <person name="da Silva A.C.R."/>
            <person name="Ferro J.A."/>
            <person name="Reinach F.C."/>
            <person name="Farah C.S."/>
            <person name="Furlan L.R."/>
            <person name="Quaggio R.B."/>
            <person name="Monteiro-Vitorello C.B."/>
            <person name="Van Sluys M.A."/>
            <person name="Almeida N.F. Jr."/>
            <person name="Alves L.M.C."/>
            <person name="do Amaral A.M."/>
            <person name="Bertolini M.C."/>
            <person name="Camargo L.E.A."/>
            <person name="Camarotte G."/>
            <person name="Cannavan F."/>
            <person name="Cardozo J."/>
            <person name="Chambergo F."/>
            <person name="Ciapina L.P."/>
            <person name="Cicarelli R.M.B."/>
            <person name="Coutinho L.L."/>
            <person name="Cursino-Santos J.R."/>
            <person name="El-Dorry H."/>
            <person name="Faria J.B."/>
            <person name="Ferreira A.J.S."/>
            <person name="Ferreira R.C.C."/>
            <person name="Ferro M.I.T."/>
            <person name="Formighieri E.F."/>
            <person name="Franco M.C."/>
            <person name="Greggio C.C."/>
            <person name="Gruber A."/>
            <person name="Katsuyama A.M."/>
            <person name="Kishi L.T."/>
            <person name="Leite R.P."/>
            <person name="Lemos E.G.M."/>
            <person name="Lemos M.V.F."/>
            <person name="Locali E.C."/>
            <person name="Machado M.A."/>
            <person name="Madeira A.M.B.N."/>
            <person name="Martinez-Rossi N.M."/>
            <person name="Martins E.C."/>
            <person name="Meidanis J."/>
            <person name="Menck C.F.M."/>
            <person name="Miyaki C.Y."/>
            <person name="Moon D.H."/>
            <person name="Moreira L.M."/>
            <person name="Novo M.T.M."/>
            <person name="Okura V.K."/>
            <person name="Oliveira M.C."/>
            <person name="Oliveira V.R."/>
            <person name="Pereira H.A."/>
            <person name="Rossi A."/>
            <person name="Sena J.A.D."/>
            <person name="Silva C."/>
            <person name="de Souza R.F."/>
            <person name="Spinola L.A.F."/>
            <person name="Takita M.A."/>
            <person name="Tamura R.E."/>
            <person name="Teixeira E.C."/>
            <person name="Tezza R.I.D."/>
            <person name="Trindade dos Santos M."/>
            <person name="Truffi D."/>
            <person name="Tsai S.M."/>
            <person name="White F.F."/>
            <person name="Setubal J.C."/>
            <person name="Kitajima J.P."/>
        </authorList>
    </citation>
    <scope>NUCLEOTIDE SEQUENCE [LARGE SCALE GENOMIC DNA]</scope>
    <source>
        <strain>306</strain>
    </source>
</reference>
<accession>Q8PPB0</accession>
<keyword id="KW-0131">Cell cycle</keyword>
<keyword id="KW-0132">Cell division</keyword>
<keyword id="KW-0997">Cell inner membrane</keyword>
<keyword id="KW-1003">Cell membrane</keyword>
<keyword id="KW-0133">Cell shape</keyword>
<keyword id="KW-0961">Cell wall biogenesis/degradation</keyword>
<keyword id="KW-0460">Magnesium</keyword>
<keyword id="KW-0472">Membrane</keyword>
<keyword id="KW-0479">Metal-binding</keyword>
<keyword id="KW-0573">Peptidoglycan synthesis</keyword>
<keyword id="KW-0808">Transferase</keyword>
<keyword id="KW-0812">Transmembrane</keyword>
<keyword id="KW-1133">Transmembrane helix</keyword>
<comment type="function">
    <text evidence="1">Catalyzes the initial step of the lipid cycle reactions in the biosynthesis of the cell wall peptidoglycan: transfers peptidoglycan precursor phospho-MurNAc-pentapeptide from UDP-MurNAc-pentapeptide onto the lipid carrier undecaprenyl phosphate, yielding undecaprenyl-pyrophosphoryl-MurNAc-pentapeptide, known as lipid I.</text>
</comment>
<comment type="catalytic activity">
    <reaction evidence="1">
        <text>UDP-N-acetyl-alpha-D-muramoyl-L-alanyl-gamma-D-glutamyl-meso-2,6-diaminopimeloyl-D-alanyl-D-alanine + di-trans,octa-cis-undecaprenyl phosphate = di-trans,octa-cis-undecaprenyl diphospho-N-acetyl-alpha-D-muramoyl-L-alanyl-D-glutamyl-meso-2,6-diaminopimeloyl-D-alanyl-D-alanine + UMP</text>
        <dbReference type="Rhea" id="RHEA:28386"/>
        <dbReference type="ChEBI" id="CHEBI:57865"/>
        <dbReference type="ChEBI" id="CHEBI:60392"/>
        <dbReference type="ChEBI" id="CHEBI:61386"/>
        <dbReference type="ChEBI" id="CHEBI:61387"/>
        <dbReference type="EC" id="2.7.8.13"/>
    </reaction>
</comment>
<comment type="cofactor">
    <cofactor evidence="1">
        <name>Mg(2+)</name>
        <dbReference type="ChEBI" id="CHEBI:18420"/>
    </cofactor>
</comment>
<comment type="pathway">
    <text evidence="1">Cell wall biogenesis; peptidoglycan biosynthesis.</text>
</comment>
<comment type="subcellular location">
    <subcellularLocation>
        <location evidence="1">Cell inner membrane</location>
        <topology evidence="1">Multi-pass membrane protein</topology>
    </subcellularLocation>
</comment>
<comment type="similarity">
    <text evidence="1">Belongs to the glycosyltransferase 4 family. MraY subfamily.</text>
</comment>
<name>MRAY_XANAC</name>
<proteinExistence type="inferred from homology"/>
<gene>
    <name evidence="1" type="primary">mraY</name>
    <name type="ordered locus">XAC0777</name>
</gene>
<feature type="chain" id="PRO_0000108930" description="Phospho-N-acetylmuramoyl-pentapeptide-transferase">
    <location>
        <begin position="1"/>
        <end position="361"/>
    </location>
</feature>
<feature type="transmembrane region" description="Helical" evidence="1">
    <location>
        <begin position="25"/>
        <end position="45"/>
    </location>
</feature>
<feature type="transmembrane region" description="Helical" evidence="1">
    <location>
        <begin position="73"/>
        <end position="93"/>
    </location>
</feature>
<feature type="transmembrane region" description="Helical" evidence="1">
    <location>
        <begin position="98"/>
        <end position="118"/>
    </location>
</feature>
<feature type="transmembrane region" description="Helical" evidence="1">
    <location>
        <begin position="139"/>
        <end position="159"/>
    </location>
</feature>
<feature type="transmembrane region" description="Helical" evidence="1">
    <location>
        <begin position="168"/>
        <end position="188"/>
    </location>
</feature>
<feature type="transmembrane region" description="Helical" evidence="1">
    <location>
        <begin position="200"/>
        <end position="220"/>
    </location>
</feature>
<feature type="transmembrane region" description="Helical" evidence="1">
    <location>
        <begin position="237"/>
        <end position="257"/>
    </location>
</feature>
<feature type="transmembrane region" description="Helical" evidence="1">
    <location>
        <begin position="264"/>
        <end position="284"/>
    </location>
</feature>
<feature type="transmembrane region" description="Helical" evidence="1">
    <location>
        <begin position="289"/>
        <end position="309"/>
    </location>
</feature>
<feature type="transmembrane region" description="Helical" evidence="1">
    <location>
        <begin position="339"/>
        <end position="359"/>
    </location>
</feature>
<evidence type="ECO:0000255" key="1">
    <source>
        <dbReference type="HAMAP-Rule" id="MF_00038"/>
    </source>
</evidence>
<organism>
    <name type="scientific">Xanthomonas axonopodis pv. citri (strain 306)</name>
    <dbReference type="NCBI Taxonomy" id="190486"/>
    <lineage>
        <taxon>Bacteria</taxon>
        <taxon>Pseudomonadati</taxon>
        <taxon>Pseudomonadota</taxon>
        <taxon>Gammaproteobacteria</taxon>
        <taxon>Lysobacterales</taxon>
        <taxon>Lysobacteraceae</taxon>
        <taxon>Xanthomonas</taxon>
    </lineage>
</organism>